<feature type="chain" id="PRO_0000181110" description="Large ribosomal subunit protein bL27">
    <location>
        <begin position="1"/>
        <end position="85"/>
    </location>
</feature>
<feature type="region of interest" description="Disordered" evidence="2">
    <location>
        <begin position="1"/>
        <end position="22"/>
    </location>
</feature>
<feature type="compositionally biased region" description="Polar residues" evidence="2">
    <location>
        <begin position="7"/>
        <end position="19"/>
    </location>
</feature>
<sequence length="85" mass="8786">MAHKKGASSTRNGRDSNAQRLGVKRFGGQTVNAGEILVRQRGTHFHPGANVGRGGDDTLFALAAGSVEFGAKGGRKVVNIVAVEA</sequence>
<name>RL27_LEIXX</name>
<evidence type="ECO:0000255" key="1">
    <source>
        <dbReference type="HAMAP-Rule" id="MF_00539"/>
    </source>
</evidence>
<evidence type="ECO:0000256" key="2">
    <source>
        <dbReference type="SAM" id="MobiDB-lite"/>
    </source>
</evidence>
<evidence type="ECO:0000305" key="3"/>
<accession>Q6AFY2</accession>
<keyword id="KW-1185">Reference proteome</keyword>
<keyword id="KW-0687">Ribonucleoprotein</keyword>
<keyword id="KW-0689">Ribosomal protein</keyword>
<organism>
    <name type="scientific">Leifsonia xyli subsp. xyli (strain CTCB07)</name>
    <dbReference type="NCBI Taxonomy" id="281090"/>
    <lineage>
        <taxon>Bacteria</taxon>
        <taxon>Bacillati</taxon>
        <taxon>Actinomycetota</taxon>
        <taxon>Actinomycetes</taxon>
        <taxon>Micrococcales</taxon>
        <taxon>Microbacteriaceae</taxon>
        <taxon>Leifsonia</taxon>
    </lineage>
</organism>
<proteinExistence type="inferred from homology"/>
<comment type="similarity">
    <text evidence="1">Belongs to the bacterial ribosomal protein bL27 family.</text>
</comment>
<reference key="1">
    <citation type="journal article" date="2004" name="Mol. Plant Microbe Interact.">
        <title>The genome sequence of the Gram-positive sugarcane pathogen Leifsonia xyli subsp. xyli.</title>
        <authorList>
            <person name="Monteiro-Vitorello C.B."/>
            <person name="Camargo L.E.A."/>
            <person name="Van Sluys M.A."/>
            <person name="Kitajima J.P."/>
            <person name="Truffi D."/>
            <person name="do Amaral A.M."/>
            <person name="Harakava R."/>
            <person name="de Oliveira J.C.F."/>
            <person name="Wood D."/>
            <person name="de Oliveira M.C."/>
            <person name="Miyaki C.Y."/>
            <person name="Takita M.A."/>
            <person name="da Silva A.C.R."/>
            <person name="Furlan L.R."/>
            <person name="Carraro D.M."/>
            <person name="Camarotte G."/>
            <person name="Almeida N.F. Jr."/>
            <person name="Carrer H."/>
            <person name="Coutinho L.L."/>
            <person name="El-Dorry H.A."/>
            <person name="Ferro M.I.T."/>
            <person name="Gagliardi P.R."/>
            <person name="Giglioti E."/>
            <person name="Goldman M.H.S."/>
            <person name="Goldman G.H."/>
            <person name="Kimura E.T."/>
            <person name="Ferro E.S."/>
            <person name="Kuramae E.E."/>
            <person name="Lemos E.G.M."/>
            <person name="Lemos M.V.F."/>
            <person name="Mauro S.M.Z."/>
            <person name="Machado M.A."/>
            <person name="Marino C.L."/>
            <person name="Menck C.F."/>
            <person name="Nunes L.R."/>
            <person name="Oliveira R.C."/>
            <person name="Pereira G.G."/>
            <person name="Siqueira W."/>
            <person name="de Souza A.A."/>
            <person name="Tsai S.M."/>
            <person name="Zanca A.S."/>
            <person name="Simpson A.J.G."/>
            <person name="Brumbley S.M."/>
            <person name="Setubal J.C."/>
        </authorList>
    </citation>
    <scope>NUCLEOTIDE SEQUENCE [LARGE SCALE GENOMIC DNA]</scope>
    <source>
        <strain>CTCB07</strain>
    </source>
</reference>
<gene>
    <name evidence="1" type="primary">rpmA</name>
    <name type="ordered locus">Lxx08050</name>
</gene>
<dbReference type="EMBL" id="AE016822">
    <property type="protein sequence ID" value="AAT88713.1"/>
    <property type="molecule type" value="Genomic_DNA"/>
</dbReference>
<dbReference type="RefSeq" id="WP_011185711.1">
    <property type="nucleotide sequence ID" value="NC_006087.1"/>
</dbReference>
<dbReference type="SMR" id="Q6AFY2"/>
<dbReference type="STRING" id="281090.Lxx08050"/>
<dbReference type="KEGG" id="lxx:Lxx08050"/>
<dbReference type="eggNOG" id="COG0211">
    <property type="taxonomic scope" value="Bacteria"/>
</dbReference>
<dbReference type="HOGENOM" id="CLU_095424_4_0_11"/>
<dbReference type="Proteomes" id="UP000001306">
    <property type="component" value="Chromosome"/>
</dbReference>
<dbReference type="GO" id="GO:0022625">
    <property type="term" value="C:cytosolic large ribosomal subunit"/>
    <property type="evidence" value="ECO:0007669"/>
    <property type="project" value="TreeGrafter"/>
</dbReference>
<dbReference type="GO" id="GO:0003735">
    <property type="term" value="F:structural constituent of ribosome"/>
    <property type="evidence" value="ECO:0007669"/>
    <property type="project" value="InterPro"/>
</dbReference>
<dbReference type="GO" id="GO:0006412">
    <property type="term" value="P:translation"/>
    <property type="evidence" value="ECO:0007669"/>
    <property type="project" value="UniProtKB-UniRule"/>
</dbReference>
<dbReference type="FunFam" id="2.40.50.100:FF:000020">
    <property type="entry name" value="50S ribosomal protein L27"/>
    <property type="match status" value="1"/>
</dbReference>
<dbReference type="Gene3D" id="2.40.50.100">
    <property type="match status" value="1"/>
</dbReference>
<dbReference type="HAMAP" id="MF_00539">
    <property type="entry name" value="Ribosomal_bL27"/>
    <property type="match status" value="1"/>
</dbReference>
<dbReference type="InterPro" id="IPR001684">
    <property type="entry name" value="Ribosomal_bL27"/>
</dbReference>
<dbReference type="InterPro" id="IPR018261">
    <property type="entry name" value="Ribosomal_bL27_CS"/>
</dbReference>
<dbReference type="NCBIfam" id="TIGR00062">
    <property type="entry name" value="L27"/>
    <property type="match status" value="1"/>
</dbReference>
<dbReference type="PANTHER" id="PTHR15893:SF0">
    <property type="entry name" value="LARGE RIBOSOMAL SUBUNIT PROTEIN BL27M"/>
    <property type="match status" value="1"/>
</dbReference>
<dbReference type="PANTHER" id="PTHR15893">
    <property type="entry name" value="RIBOSOMAL PROTEIN L27"/>
    <property type="match status" value="1"/>
</dbReference>
<dbReference type="Pfam" id="PF01016">
    <property type="entry name" value="Ribosomal_L27"/>
    <property type="match status" value="1"/>
</dbReference>
<dbReference type="PRINTS" id="PR00063">
    <property type="entry name" value="RIBOSOMALL27"/>
</dbReference>
<dbReference type="SUPFAM" id="SSF110324">
    <property type="entry name" value="Ribosomal L27 protein-like"/>
    <property type="match status" value="1"/>
</dbReference>
<dbReference type="PROSITE" id="PS00831">
    <property type="entry name" value="RIBOSOMAL_L27"/>
    <property type="match status" value="1"/>
</dbReference>
<protein>
    <recommendedName>
        <fullName evidence="1">Large ribosomal subunit protein bL27</fullName>
    </recommendedName>
    <alternativeName>
        <fullName evidence="3">50S ribosomal protein L27</fullName>
    </alternativeName>
</protein>